<name>GSTA4_MOUSE</name>
<reference key="1">
    <citation type="journal article" date="1992" name="FEBS Lett.">
        <title>A subgroup of class alpha glutathione S-transferases. Cloning of cDNA for mouse lung glutathione S-transferase GST 5.7.</title>
        <authorList>
            <person name="Zimniak P."/>
            <person name="Eckles M.A."/>
            <person name="Saxena M."/>
            <person name="Awasthi Y.C."/>
        </authorList>
    </citation>
    <scope>NUCLEOTIDE SEQUENCE [MRNA]</scope>
    <source>
        <tissue>Lung</tissue>
    </source>
</reference>
<reference key="2">
    <citation type="journal article" date="2005" name="Science">
        <title>The transcriptional landscape of the mammalian genome.</title>
        <authorList>
            <person name="Carninci P."/>
            <person name="Kasukawa T."/>
            <person name="Katayama S."/>
            <person name="Gough J."/>
            <person name="Frith M.C."/>
            <person name="Maeda N."/>
            <person name="Oyama R."/>
            <person name="Ravasi T."/>
            <person name="Lenhard B."/>
            <person name="Wells C."/>
            <person name="Kodzius R."/>
            <person name="Shimokawa K."/>
            <person name="Bajic V.B."/>
            <person name="Brenner S.E."/>
            <person name="Batalov S."/>
            <person name="Forrest A.R."/>
            <person name="Zavolan M."/>
            <person name="Davis M.J."/>
            <person name="Wilming L.G."/>
            <person name="Aidinis V."/>
            <person name="Allen J.E."/>
            <person name="Ambesi-Impiombato A."/>
            <person name="Apweiler R."/>
            <person name="Aturaliya R.N."/>
            <person name="Bailey T.L."/>
            <person name="Bansal M."/>
            <person name="Baxter L."/>
            <person name="Beisel K.W."/>
            <person name="Bersano T."/>
            <person name="Bono H."/>
            <person name="Chalk A.M."/>
            <person name="Chiu K.P."/>
            <person name="Choudhary V."/>
            <person name="Christoffels A."/>
            <person name="Clutterbuck D.R."/>
            <person name="Crowe M.L."/>
            <person name="Dalla E."/>
            <person name="Dalrymple B.P."/>
            <person name="de Bono B."/>
            <person name="Della Gatta G."/>
            <person name="di Bernardo D."/>
            <person name="Down T."/>
            <person name="Engstrom P."/>
            <person name="Fagiolini M."/>
            <person name="Faulkner G."/>
            <person name="Fletcher C.F."/>
            <person name="Fukushima T."/>
            <person name="Furuno M."/>
            <person name="Futaki S."/>
            <person name="Gariboldi M."/>
            <person name="Georgii-Hemming P."/>
            <person name="Gingeras T.R."/>
            <person name="Gojobori T."/>
            <person name="Green R.E."/>
            <person name="Gustincich S."/>
            <person name="Harbers M."/>
            <person name="Hayashi Y."/>
            <person name="Hensch T.K."/>
            <person name="Hirokawa N."/>
            <person name="Hill D."/>
            <person name="Huminiecki L."/>
            <person name="Iacono M."/>
            <person name="Ikeo K."/>
            <person name="Iwama A."/>
            <person name="Ishikawa T."/>
            <person name="Jakt M."/>
            <person name="Kanapin A."/>
            <person name="Katoh M."/>
            <person name="Kawasawa Y."/>
            <person name="Kelso J."/>
            <person name="Kitamura H."/>
            <person name="Kitano H."/>
            <person name="Kollias G."/>
            <person name="Krishnan S.P."/>
            <person name="Kruger A."/>
            <person name="Kummerfeld S.K."/>
            <person name="Kurochkin I.V."/>
            <person name="Lareau L.F."/>
            <person name="Lazarevic D."/>
            <person name="Lipovich L."/>
            <person name="Liu J."/>
            <person name="Liuni S."/>
            <person name="McWilliam S."/>
            <person name="Madan Babu M."/>
            <person name="Madera M."/>
            <person name="Marchionni L."/>
            <person name="Matsuda H."/>
            <person name="Matsuzawa S."/>
            <person name="Miki H."/>
            <person name="Mignone F."/>
            <person name="Miyake S."/>
            <person name="Morris K."/>
            <person name="Mottagui-Tabar S."/>
            <person name="Mulder N."/>
            <person name="Nakano N."/>
            <person name="Nakauchi H."/>
            <person name="Ng P."/>
            <person name="Nilsson R."/>
            <person name="Nishiguchi S."/>
            <person name="Nishikawa S."/>
            <person name="Nori F."/>
            <person name="Ohara O."/>
            <person name="Okazaki Y."/>
            <person name="Orlando V."/>
            <person name="Pang K.C."/>
            <person name="Pavan W.J."/>
            <person name="Pavesi G."/>
            <person name="Pesole G."/>
            <person name="Petrovsky N."/>
            <person name="Piazza S."/>
            <person name="Reed J."/>
            <person name="Reid J.F."/>
            <person name="Ring B.Z."/>
            <person name="Ringwald M."/>
            <person name="Rost B."/>
            <person name="Ruan Y."/>
            <person name="Salzberg S.L."/>
            <person name="Sandelin A."/>
            <person name="Schneider C."/>
            <person name="Schoenbach C."/>
            <person name="Sekiguchi K."/>
            <person name="Semple C.A."/>
            <person name="Seno S."/>
            <person name="Sessa L."/>
            <person name="Sheng Y."/>
            <person name="Shibata Y."/>
            <person name="Shimada H."/>
            <person name="Shimada K."/>
            <person name="Silva D."/>
            <person name="Sinclair B."/>
            <person name="Sperling S."/>
            <person name="Stupka E."/>
            <person name="Sugiura K."/>
            <person name="Sultana R."/>
            <person name="Takenaka Y."/>
            <person name="Taki K."/>
            <person name="Tammoja K."/>
            <person name="Tan S.L."/>
            <person name="Tang S."/>
            <person name="Taylor M.S."/>
            <person name="Tegner J."/>
            <person name="Teichmann S.A."/>
            <person name="Ueda H.R."/>
            <person name="van Nimwegen E."/>
            <person name="Verardo R."/>
            <person name="Wei C.L."/>
            <person name="Yagi K."/>
            <person name="Yamanishi H."/>
            <person name="Zabarovsky E."/>
            <person name="Zhu S."/>
            <person name="Zimmer A."/>
            <person name="Hide W."/>
            <person name="Bult C."/>
            <person name="Grimmond S.M."/>
            <person name="Teasdale R.D."/>
            <person name="Liu E.T."/>
            <person name="Brusic V."/>
            <person name="Quackenbush J."/>
            <person name="Wahlestedt C."/>
            <person name="Mattick J.S."/>
            <person name="Hume D.A."/>
            <person name="Kai C."/>
            <person name="Sasaki D."/>
            <person name="Tomaru Y."/>
            <person name="Fukuda S."/>
            <person name="Kanamori-Katayama M."/>
            <person name="Suzuki M."/>
            <person name="Aoki J."/>
            <person name="Arakawa T."/>
            <person name="Iida J."/>
            <person name="Imamura K."/>
            <person name="Itoh M."/>
            <person name="Kato T."/>
            <person name="Kawaji H."/>
            <person name="Kawagashira N."/>
            <person name="Kawashima T."/>
            <person name="Kojima M."/>
            <person name="Kondo S."/>
            <person name="Konno H."/>
            <person name="Nakano K."/>
            <person name="Ninomiya N."/>
            <person name="Nishio T."/>
            <person name="Okada M."/>
            <person name="Plessy C."/>
            <person name="Shibata K."/>
            <person name="Shiraki T."/>
            <person name="Suzuki S."/>
            <person name="Tagami M."/>
            <person name="Waki K."/>
            <person name="Watahiki A."/>
            <person name="Okamura-Oho Y."/>
            <person name="Suzuki H."/>
            <person name="Kawai J."/>
            <person name="Hayashizaki Y."/>
        </authorList>
    </citation>
    <scope>NUCLEOTIDE SEQUENCE [LARGE SCALE MRNA]</scope>
    <source>
        <strain>C57BL/6J</strain>
        <tissue>Embryo</tissue>
        <tissue>Small intestine</tissue>
        <tissue>Tongue</tissue>
    </source>
</reference>
<reference key="3">
    <citation type="journal article" date="2004" name="Genome Res.">
        <title>The status, quality, and expansion of the NIH full-length cDNA project: the Mammalian Gene Collection (MGC).</title>
        <authorList>
            <consortium name="The MGC Project Team"/>
        </authorList>
    </citation>
    <scope>NUCLEOTIDE SEQUENCE [LARGE SCALE MRNA]</scope>
</reference>
<reference key="4">
    <citation type="journal article" date="1991" name="Biochem. J.">
        <title>Characterization of a novel glutathione S-transferase isoenzyme from mouse lung and liver having structural similarity to rat glutathione S-transferase 8-8.</title>
        <authorList>
            <person name="Medh R.D."/>
            <person name="Saxena M."/>
            <person name="Singhal S.S."/>
            <person name="Ahmad H."/>
            <person name="Awasthi Y.C."/>
        </authorList>
    </citation>
    <scope>PROTEIN SEQUENCE OF 106-120 AND 167-184</scope>
    <source>
        <strain>CD-1</strain>
        <tissue>Liver</tissue>
        <tissue>Lung</tissue>
    </source>
</reference>
<reference key="5">
    <citation type="journal article" date="2010" name="Cell">
        <title>A tissue-specific atlas of mouse protein phosphorylation and expression.</title>
        <authorList>
            <person name="Huttlin E.L."/>
            <person name="Jedrychowski M.P."/>
            <person name="Elias J.E."/>
            <person name="Goswami T."/>
            <person name="Rad R."/>
            <person name="Beausoleil S.A."/>
            <person name="Villen J."/>
            <person name="Haas W."/>
            <person name="Sowa M.E."/>
            <person name="Gygi S.P."/>
        </authorList>
    </citation>
    <scope>IDENTIFICATION BY MASS SPECTROMETRY [LARGE SCALE ANALYSIS]</scope>
    <source>
        <tissue>Brain</tissue>
        <tissue>Brown adipose tissue</tissue>
        <tissue>Heart</tissue>
        <tissue>Kidney</tissue>
        <tissue>Liver</tissue>
        <tissue>Lung</tissue>
        <tissue>Pancreas</tissue>
        <tissue>Spleen</tissue>
        <tissue>Testis</tissue>
    </source>
</reference>
<reference key="6">
    <citation type="journal article" date="1998" name="FEBS Lett.">
        <title>Crystal structure of a murine alpha-class glutathione S-transferase involved in cellular defense against oxidative stress.</title>
        <authorList>
            <person name="Krengel U."/>
            <person name="Schroter K.H."/>
            <person name="Hoier H."/>
            <person name="Arkema A."/>
            <person name="Kalk K.H."/>
            <person name="Zimniak P."/>
            <person name="Dijkstra B.W."/>
        </authorList>
    </citation>
    <scope>X-RAY CRYSTALLOGRAPHY (2.9 ANGSTROMS)</scope>
    <source>
        <tissue>Lung</tissue>
    </source>
</reference>
<reference key="7">
    <citation type="journal article" date="1999" name="Biochemistry">
        <title>Crystal structure of a murine glutathione S-transferase in complex with a glutathione conjugate of 4-hydroxynon-2-enal in one subunit and glutathione in the other: evidence of signaling across the dimer interface.</title>
        <authorList>
            <person name="Xiao B."/>
            <person name="Singh S.P."/>
            <person name="Nanduri B."/>
            <person name="Awasthi Y.C."/>
            <person name="Zimniak P."/>
            <person name="Ji X."/>
        </authorList>
    </citation>
    <scope>X-RAY CRYSTALLOGRAPHY (2.6 ANGSTROMS) IN COMPLEX WITH GLUTATHIONE</scope>
    <scope>CATALYTIC ACTIVITY</scope>
    <scope>FUNCTION</scope>
    <scope>SUBUNIT</scope>
    <source>
        <tissue>Lung</tissue>
    </source>
</reference>
<organism>
    <name type="scientific">Mus musculus</name>
    <name type="common">Mouse</name>
    <dbReference type="NCBI Taxonomy" id="10090"/>
    <lineage>
        <taxon>Eukaryota</taxon>
        <taxon>Metazoa</taxon>
        <taxon>Chordata</taxon>
        <taxon>Craniata</taxon>
        <taxon>Vertebrata</taxon>
        <taxon>Euteleostomi</taxon>
        <taxon>Mammalia</taxon>
        <taxon>Eutheria</taxon>
        <taxon>Euarchontoglires</taxon>
        <taxon>Glires</taxon>
        <taxon>Rodentia</taxon>
        <taxon>Myomorpha</taxon>
        <taxon>Muroidea</taxon>
        <taxon>Muridae</taxon>
        <taxon>Murinae</taxon>
        <taxon>Mus</taxon>
        <taxon>Mus</taxon>
    </lineage>
</organism>
<evidence type="ECO:0000250" key="1">
    <source>
        <dbReference type="UniProtKB" id="P13745"/>
    </source>
</evidence>
<evidence type="ECO:0000250" key="2">
    <source>
        <dbReference type="UniProtKB" id="P14942"/>
    </source>
</evidence>
<evidence type="ECO:0000269" key="3">
    <source>
    </source>
</evidence>
<evidence type="ECO:0000305" key="4"/>
<evidence type="ECO:0007744" key="5">
    <source>
        <dbReference type="PDB" id="1B48"/>
    </source>
</evidence>
<evidence type="ECO:0007829" key="6">
    <source>
        <dbReference type="PDB" id="1B48"/>
    </source>
</evidence>
<evidence type="ECO:0007829" key="7">
    <source>
        <dbReference type="PDB" id="1GUK"/>
    </source>
</evidence>
<gene>
    <name type="primary">Gsta4</name>
    <name type="synonym">Gsta</name>
</gene>
<sequence>MAAKPKLYYFNGRGRMESIRWLLAAAGVEFEEEFLETREQYEKMQKDGHLLFGQVPLVEIDGMMLTQTRAILSYLAAKYNLYGKDLKERVRIDMYADGTQDLMMMIAVAPFKTPKEKEESYDLILSRAKTRYFPVFEKILKDHGEAFLVGNQLSWADIQLLEAILMVEELSAPVLSDFPLLQAFKTRISNIPTIKKFLQPGSQRKPPPDGPYVEVVRTVLKF</sequence>
<feature type="chain" id="PRO_0000185791" description="Glutathione S-transferase A4">
    <location>
        <begin position="1"/>
        <end position="222"/>
    </location>
</feature>
<feature type="domain" description="GST N-terminal">
    <location>
        <begin position="3"/>
        <end position="83"/>
    </location>
</feature>
<feature type="domain" description="GST C-terminal">
    <location>
        <begin position="85"/>
        <end position="208"/>
    </location>
</feature>
<feature type="binding site" evidence="1">
    <location>
        <position position="9"/>
    </location>
    <ligand>
        <name>glutathione</name>
        <dbReference type="ChEBI" id="CHEBI:57925"/>
    </ligand>
</feature>
<feature type="binding site" evidence="3 5">
    <location>
        <begin position="53"/>
        <end position="55"/>
    </location>
    <ligand>
        <name>glutathione</name>
        <dbReference type="ChEBI" id="CHEBI:57925"/>
    </ligand>
</feature>
<feature type="binding site" evidence="3 5">
    <location>
        <begin position="66"/>
        <end position="68"/>
    </location>
    <ligand>
        <name>glutathione</name>
        <dbReference type="ChEBI" id="CHEBI:57925"/>
    </ligand>
</feature>
<feature type="modified residue" description="N-acetylmethionine" evidence="2">
    <location>
        <position position="1"/>
    </location>
</feature>
<feature type="sequence variant" description="Requires 2 nucleotide substitutions.">
    <original>K</original>
    <variation>P</variation>
    <location>
        <position position="115"/>
    </location>
</feature>
<feature type="sequence variant">
    <original>V</original>
    <variation>G</variation>
    <location>
        <position position="167"/>
    </location>
</feature>
<feature type="sequence variant">
    <original>PL</original>
    <variation>GE</variation>
    <location>
        <begin position="179"/>
        <end position="180"/>
    </location>
</feature>
<feature type="sequence conflict" description="In Ref. 2; BAB31640." evidence="4" ref="2">
    <original>E</original>
    <variation>D</variation>
    <location>
        <position position="36"/>
    </location>
</feature>
<feature type="sequence conflict" description="In Ref. 2; BAB27873." evidence="4" ref="2">
    <original>KP</original>
    <variation>SA</variation>
    <location>
        <begin position="205"/>
        <end position="206"/>
    </location>
</feature>
<feature type="sequence conflict" description="In Ref. 1; AAA37754." evidence="4" ref="1">
    <original>T</original>
    <variation>I</variation>
    <location>
        <position position="218"/>
    </location>
</feature>
<feature type="strand" evidence="6">
    <location>
        <begin position="6"/>
        <end position="9"/>
    </location>
</feature>
<feature type="turn" evidence="6">
    <location>
        <begin position="14"/>
        <end position="16"/>
    </location>
</feature>
<feature type="helix" evidence="6">
    <location>
        <begin position="17"/>
        <end position="26"/>
    </location>
</feature>
<feature type="strand" evidence="7">
    <location>
        <begin position="31"/>
        <end position="34"/>
    </location>
</feature>
<feature type="helix" evidence="6">
    <location>
        <begin position="38"/>
        <end position="45"/>
    </location>
</feature>
<feature type="turn" evidence="6">
    <location>
        <begin position="46"/>
        <end position="48"/>
    </location>
</feature>
<feature type="strand" evidence="6">
    <location>
        <begin position="50"/>
        <end position="53"/>
    </location>
</feature>
<feature type="strand" evidence="6">
    <location>
        <begin position="57"/>
        <end position="60"/>
    </location>
</feature>
<feature type="strand" evidence="6">
    <location>
        <begin position="63"/>
        <end position="65"/>
    </location>
</feature>
<feature type="helix" evidence="6">
    <location>
        <begin position="68"/>
        <end position="78"/>
    </location>
</feature>
<feature type="helix" evidence="6">
    <location>
        <begin position="86"/>
        <end position="108"/>
    </location>
</feature>
<feature type="helix" evidence="6">
    <location>
        <begin position="109"/>
        <end position="111"/>
    </location>
</feature>
<feature type="helix" evidence="6">
    <location>
        <begin position="114"/>
        <end position="131"/>
    </location>
</feature>
<feature type="helix" evidence="6">
    <location>
        <begin position="133"/>
        <end position="142"/>
    </location>
</feature>
<feature type="strand" evidence="6">
    <location>
        <begin position="145"/>
        <end position="152"/>
    </location>
</feature>
<feature type="helix" evidence="6">
    <location>
        <begin position="155"/>
        <end position="168"/>
    </location>
</feature>
<feature type="helix" evidence="6">
    <location>
        <begin position="174"/>
        <end position="177"/>
    </location>
</feature>
<feature type="helix" evidence="6">
    <location>
        <begin position="179"/>
        <end position="189"/>
    </location>
</feature>
<feature type="helix" evidence="6">
    <location>
        <begin position="192"/>
        <end position="198"/>
    </location>
</feature>
<feature type="strand" evidence="7">
    <location>
        <begin position="199"/>
        <end position="203"/>
    </location>
</feature>
<feature type="helix" evidence="6">
    <location>
        <begin position="210"/>
        <end position="219"/>
    </location>
</feature>
<accession>P24472</accession>
<accession>Q9CQ81</accession>
<accession>Q9CTY7</accession>
<accession>Q9CY87</accession>
<accession>Q9D038</accession>
<keyword id="KW-0002">3D-structure</keyword>
<keyword id="KW-0007">Acetylation</keyword>
<keyword id="KW-0963">Cytoplasm</keyword>
<keyword id="KW-0903">Direct protein sequencing</keyword>
<keyword id="KW-1185">Reference proteome</keyword>
<keyword id="KW-0808">Transferase</keyword>
<proteinExistence type="evidence at protein level"/>
<dbReference type="EC" id="2.5.1.18"/>
<dbReference type="EMBL" id="L06047">
    <property type="protein sequence ID" value="AAA37754.1"/>
    <property type="molecule type" value="mRNA"/>
</dbReference>
<dbReference type="EMBL" id="AK008189">
    <property type="protein sequence ID" value="BAB25520.1"/>
    <property type="molecule type" value="mRNA"/>
</dbReference>
<dbReference type="EMBL" id="AK008193">
    <property type="protein sequence ID" value="BAB25524.1"/>
    <property type="molecule type" value="mRNA"/>
</dbReference>
<dbReference type="EMBL" id="AK008400">
    <property type="protein sequence ID" value="BAB25649.1"/>
    <property type="molecule type" value="mRNA"/>
</dbReference>
<dbReference type="EMBL" id="AK008490">
    <property type="protein sequence ID" value="BAB25696.1"/>
    <property type="molecule type" value="mRNA"/>
</dbReference>
<dbReference type="EMBL" id="AK009668">
    <property type="protein sequence ID" value="BAB26429.1"/>
    <property type="molecule type" value="mRNA"/>
</dbReference>
<dbReference type="EMBL" id="AK010098">
    <property type="protein sequence ID" value="BAB26701.1"/>
    <property type="molecule type" value="mRNA"/>
</dbReference>
<dbReference type="EMBL" id="AK011177">
    <property type="protein sequence ID" value="BAB27449.1"/>
    <property type="molecule type" value="mRNA"/>
</dbReference>
<dbReference type="EMBL" id="AK011841">
    <property type="protein sequence ID" value="BAB27873.1"/>
    <property type="molecule type" value="mRNA"/>
</dbReference>
<dbReference type="EMBL" id="AK019100">
    <property type="protein sequence ID" value="BAB31546.1"/>
    <property type="molecule type" value="mRNA"/>
</dbReference>
<dbReference type="EMBL" id="AK019271">
    <property type="protein sequence ID" value="BAB31640.1"/>
    <property type="molecule type" value="mRNA"/>
</dbReference>
<dbReference type="EMBL" id="BC012639">
    <property type="protein sequence ID" value="AAH12639.1"/>
    <property type="molecule type" value="mRNA"/>
</dbReference>
<dbReference type="CCDS" id="CCDS23357.1"/>
<dbReference type="PIR" id="S27234">
    <property type="entry name" value="S27234"/>
</dbReference>
<dbReference type="RefSeq" id="NP_034487.2">
    <property type="nucleotide sequence ID" value="NM_010357.4"/>
</dbReference>
<dbReference type="PDB" id="1B48">
    <property type="method" value="X-ray"/>
    <property type="resolution" value="2.60 A"/>
    <property type="chains" value="A/B=2-222"/>
</dbReference>
<dbReference type="PDB" id="1GUK">
    <property type="method" value="X-ray"/>
    <property type="resolution" value="2.90 A"/>
    <property type="chains" value="A/B=1-222"/>
</dbReference>
<dbReference type="PDBsum" id="1B48"/>
<dbReference type="PDBsum" id="1GUK"/>
<dbReference type="SMR" id="P24472"/>
<dbReference type="BioGRID" id="200093">
    <property type="interactions" value="3"/>
</dbReference>
<dbReference type="FunCoup" id="P24472">
    <property type="interactions" value="775"/>
</dbReference>
<dbReference type="IntAct" id="P24472">
    <property type="interactions" value="1"/>
</dbReference>
<dbReference type="MINT" id="P24472"/>
<dbReference type="STRING" id="10090.ENSMUSP00000034903"/>
<dbReference type="GlyGen" id="P24472">
    <property type="glycosylation" value="1 site, 1 O-linked glycan (1 site)"/>
</dbReference>
<dbReference type="iPTMnet" id="P24472"/>
<dbReference type="PhosphoSitePlus" id="P24472"/>
<dbReference type="REPRODUCTION-2DPAGE" id="P24472"/>
<dbReference type="jPOST" id="P24472"/>
<dbReference type="PaxDb" id="10090-ENSMUSP00000034903"/>
<dbReference type="PeptideAtlas" id="P24472"/>
<dbReference type="ProteomicsDB" id="271356"/>
<dbReference type="Pumba" id="P24472"/>
<dbReference type="TopDownProteomics" id="P24472"/>
<dbReference type="DNASU" id="14860"/>
<dbReference type="Ensembl" id="ENSMUST00000034903.7">
    <property type="protein sequence ID" value="ENSMUSP00000034903.6"/>
    <property type="gene ID" value="ENSMUSG00000032348.7"/>
</dbReference>
<dbReference type="GeneID" id="14860"/>
<dbReference type="KEGG" id="mmu:14860"/>
<dbReference type="UCSC" id="uc009qty.2">
    <property type="organism name" value="mouse"/>
</dbReference>
<dbReference type="AGR" id="MGI:1309515"/>
<dbReference type="CTD" id="2941"/>
<dbReference type="MGI" id="MGI:1309515">
    <property type="gene designation" value="Gsta4"/>
</dbReference>
<dbReference type="VEuPathDB" id="HostDB:ENSMUSG00000032348"/>
<dbReference type="eggNOG" id="KOG1695">
    <property type="taxonomic scope" value="Eukaryota"/>
</dbReference>
<dbReference type="GeneTree" id="ENSGT00940000161750"/>
<dbReference type="HOGENOM" id="CLU_039475_4_0_1"/>
<dbReference type="InParanoid" id="P24472"/>
<dbReference type="OMA" id="LDLMMMI"/>
<dbReference type="OrthoDB" id="414243at2759"/>
<dbReference type="PhylomeDB" id="P24472"/>
<dbReference type="TreeFam" id="TF105321"/>
<dbReference type="BRENDA" id="2.5.1.18">
    <property type="organism ID" value="3474"/>
</dbReference>
<dbReference type="SABIO-RK" id="P24472"/>
<dbReference type="BioGRID-ORCS" id="14860">
    <property type="hits" value="0 hits in 76 CRISPR screens"/>
</dbReference>
<dbReference type="ChiTaRS" id="Gsta4">
    <property type="organism name" value="mouse"/>
</dbReference>
<dbReference type="EvolutionaryTrace" id="P24472"/>
<dbReference type="PRO" id="PR:P24472"/>
<dbReference type="Proteomes" id="UP000000589">
    <property type="component" value="Chromosome 9"/>
</dbReference>
<dbReference type="RNAct" id="P24472">
    <property type="molecule type" value="protein"/>
</dbReference>
<dbReference type="Bgee" id="ENSMUSG00000032348">
    <property type="expression patterns" value="Expressed in urinary bladder urothelium and 310 other cell types or tissues"/>
</dbReference>
<dbReference type="ExpressionAtlas" id="P24472">
    <property type="expression patterns" value="baseline and differential"/>
</dbReference>
<dbReference type="GO" id="GO:0005739">
    <property type="term" value="C:mitochondrion"/>
    <property type="evidence" value="ECO:0000314"/>
    <property type="project" value="FlyBase"/>
</dbReference>
<dbReference type="GO" id="GO:0004364">
    <property type="term" value="F:glutathione transferase activity"/>
    <property type="evidence" value="ECO:0000250"/>
    <property type="project" value="UniProtKB"/>
</dbReference>
<dbReference type="GO" id="GO:0006749">
    <property type="term" value="P:glutathione metabolic process"/>
    <property type="evidence" value="ECO:0000250"/>
    <property type="project" value="UniProtKB"/>
</dbReference>
<dbReference type="GO" id="GO:0061771">
    <property type="term" value="P:response to caloric restriction"/>
    <property type="evidence" value="ECO:0000314"/>
    <property type="project" value="MGI"/>
</dbReference>
<dbReference type="CDD" id="cd03208">
    <property type="entry name" value="GST_C_Alpha"/>
    <property type="match status" value="1"/>
</dbReference>
<dbReference type="CDD" id="cd03077">
    <property type="entry name" value="GST_N_Alpha"/>
    <property type="match status" value="1"/>
</dbReference>
<dbReference type="FunFam" id="1.20.1050.10:FF:000005">
    <property type="entry name" value="Glutathione S-transferase A1"/>
    <property type="match status" value="1"/>
</dbReference>
<dbReference type="Gene3D" id="1.20.1050.10">
    <property type="match status" value="1"/>
</dbReference>
<dbReference type="Gene3D" id="3.40.30.10">
    <property type="entry name" value="Glutaredoxin"/>
    <property type="match status" value="1"/>
</dbReference>
<dbReference type="InterPro" id="IPR010987">
    <property type="entry name" value="Glutathione-S-Trfase_C-like"/>
</dbReference>
<dbReference type="InterPro" id="IPR036282">
    <property type="entry name" value="Glutathione-S-Trfase_C_sf"/>
</dbReference>
<dbReference type="InterPro" id="IPR040079">
    <property type="entry name" value="Glutathione_S-Trfase"/>
</dbReference>
<dbReference type="InterPro" id="IPR004045">
    <property type="entry name" value="Glutathione_S-Trfase_N"/>
</dbReference>
<dbReference type="InterPro" id="IPR003080">
    <property type="entry name" value="GST_alpha"/>
</dbReference>
<dbReference type="InterPro" id="IPR004046">
    <property type="entry name" value="GST_C"/>
</dbReference>
<dbReference type="InterPro" id="IPR050213">
    <property type="entry name" value="GST_superfamily"/>
</dbReference>
<dbReference type="InterPro" id="IPR036249">
    <property type="entry name" value="Thioredoxin-like_sf"/>
</dbReference>
<dbReference type="PANTHER" id="PTHR11571">
    <property type="entry name" value="GLUTATHIONE S-TRANSFERASE"/>
    <property type="match status" value="1"/>
</dbReference>
<dbReference type="PANTHER" id="PTHR11571:SF101">
    <property type="entry name" value="GLUTATHIONE S-TRANSFERASE A4"/>
    <property type="match status" value="1"/>
</dbReference>
<dbReference type="Pfam" id="PF00043">
    <property type="entry name" value="GST_C"/>
    <property type="match status" value="1"/>
</dbReference>
<dbReference type="Pfam" id="PF02798">
    <property type="entry name" value="GST_N"/>
    <property type="match status" value="1"/>
</dbReference>
<dbReference type="PRINTS" id="PR01266">
    <property type="entry name" value="GSTRNSFRASEA"/>
</dbReference>
<dbReference type="SFLD" id="SFLDG01205">
    <property type="entry name" value="AMPS.1"/>
    <property type="match status" value="1"/>
</dbReference>
<dbReference type="SFLD" id="SFLDS00019">
    <property type="entry name" value="Glutathione_Transferase_(cytos"/>
    <property type="match status" value="1"/>
</dbReference>
<dbReference type="SUPFAM" id="SSF47616">
    <property type="entry name" value="GST C-terminal domain-like"/>
    <property type="match status" value="1"/>
</dbReference>
<dbReference type="SUPFAM" id="SSF52833">
    <property type="entry name" value="Thioredoxin-like"/>
    <property type="match status" value="1"/>
</dbReference>
<dbReference type="PROSITE" id="PS50405">
    <property type="entry name" value="GST_CTER"/>
    <property type="match status" value="1"/>
</dbReference>
<dbReference type="PROSITE" id="PS50404">
    <property type="entry name" value="GST_NTER"/>
    <property type="match status" value="1"/>
</dbReference>
<protein>
    <recommendedName>
        <fullName>Glutathione S-transferase A4</fullName>
        <ecNumber>2.5.1.18</ecNumber>
    </recommendedName>
    <alternativeName>
        <fullName>GST A4-4</fullName>
        <shortName>GSTA4-4</shortName>
    </alternativeName>
    <alternativeName>
        <fullName>GST class-alpha member 4</fullName>
    </alternativeName>
    <alternativeName>
        <fullName>Glutathione S-transferase 5.7</fullName>
        <shortName>GST 5.7</shortName>
    </alternativeName>
</protein>
<comment type="function">
    <text evidence="3">Conjugation of reduced glutathione to a wide number of exogenous and endogenous hydrophobic electrophiles.</text>
</comment>
<comment type="catalytic activity">
    <reaction evidence="3">
        <text>RX + glutathione = an S-substituted glutathione + a halide anion + H(+)</text>
        <dbReference type="Rhea" id="RHEA:16437"/>
        <dbReference type="ChEBI" id="CHEBI:15378"/>
        <dbReference type="ChEBI" id="CHEBI:16042"/>
        <dbReference type="ChEBI" id="CHEBI:17792"/>
        <dbReference type="ChEBI" id="CHEBI:57925"/>
        <dbReference type="ChEBI" id="CHEBI:90779"/>
        <dbReference type="EC" id="2.5.1.18"/>
    </reaction>
</comment>
<comment type="subunit">
    <text evidence="3">Homodimer.</text>
</comment>
<comment type="subcellular location">
    <subcellularLocation>
        <location>Cytoplasm</location>
    </subcellularLocation>
</comment>
<comment type="PTM">
    <text>The N-terminus is blocked.</text>
</comment>
<comment type="miscellaneous">
    <text>On the basis of immunological and kinetics data, GST 5.7 is distinct from alpha, mu and pI classes of GTS. However it has been postulated that this protein may be part of a distinct subgroup within this alpha class.</text>
</comment>
<comment type="miscellaneous">
    <text>The variations were found from AA sequencing and imply there are multiple forms of this protein. These variations are likely to be sex-linked and tissue specific.</text>
</comment>
<comment type="similarity">
    <text evidence="4">Belongs to the GST superfamily. Alpha family.</text>
</comment>